<feature type="chain" id="PRO_0000416545" description="Nonribosomal peptide synthetase sidD">
    <location>
        <begin position="1"/>
        <end position="2083"/>
    </location>
</feature>
<feature type="domain" description="Carrier 1" evidence="1">
    <location>
        <begin position="764"/>
        <end position="840"/>
    </location>
</feature>
<feature type="domain" description="Carrier 2" evidence="1">
    <location>
        <begin position="1557"/>
        <end position="1633"/>
    </location>
</feature>
<feature type="region of interest" description="Adenylation 1">
    <location>
        <begin position="251"/>
        <end position="650"/>
    </location>
</feature>
<feature type="region of interest" description="Condensation 1">
    <location>
        <begin position="876"/>
        <end position="1146"/>
    </location>
</feature>
<feature type="region of interest" description="Adenylation 2">
    <location>
        <begin position="1336"/>
        <end position="1421"/>
    </location>
</feature>
<feature type="region of interest" description="Condensation 2">
    <location>
        <begin position="1674"/>
        <end position="1946"/>
    </location>
</feature>
<feature type="modified residue" description="O-(pantetheine 4'-phosphoryl)serine" evidence="1">
    <location>
        <position position="801"/>
    </location>
</feature>
<feature type="modified residue" description="O-(pantetheine 4'-phosphoryl)serine" evidence="1">
    <location>
        <position position="1594"/>
    </location>
</feature>
<sequence length="2083" mass="228752">MGSIQQDDVHNQIDHCNQSDDLPAARLNCNDVELFEVAGLACDETSSPTGMRDEMVLLSWLIALLRTREGGQIRYEWAYRYPEEEPVPRCLAMNEVVAGLQSSVKETAAAVSRHISADVSSPPAPASLLLSTSSLSQTSDEAKDEGLLHLEIAFENGLCKIRPTWHSENMLPFTVTRYARTLIDTVRLCISNCDAAIQDCLRPTAYDLDEIWRWNHNLPPTYNFCMHEIISDQAQKFPDKEAIASWDGSLTYRQIDQYSSFVARSLIGMGVGLHDVLPVCFEKSRWTIVAVLAVMKAGATFVLMDPTLPLARLQNMAQQVGAKMMVSSRGQYNLATEIIPNANVLVVEENTFSSLSAEQNGEPLPTVPSSALMYMIFTSGSTGTPKGVKISHETYTSSAIPRANAVGYTEDSRVLDFASYAFDVSIDSMLLTLGNGGCLCIPSDEDRLNDINGVIRRMKVNYAGLTPSVARILDADVISSLSGLGLGGEAVSARDVNLWGQDTRIIIGYGPCECTIGCTVNSSAATGRDYISIGPGNGAVIWIVDPNDHESLVPLGAVGELLVEGPIVGQGYLNDPEKTAAAFIEDPSWLVAGHEGYPGRRGRLYKTGDLGRYDPDGSGGIVFVGRKDTQVKLRGQRVELGEIESQLRARLPSETTVIAEVIVPQGSGGQPTLVAFVAAQTTKGHDHTGLEAAELPDELRRALSEADAELAKVLPRYMVPTAYIPVNHIPTLISGKTDRKRLRQFGATVDLRQLDQDATNTAARELSDLERRLRQAWSQTLKLQACSIRLQDNFFALGGDSLTAMKLVSVCRSQGLDLSVTSMFSNPTLSAMASVVRICDVDVQRTVPAFSMITSDMNSACVEAAEPCGVGPADIEDIYPCTPTQESLFTFSLKSVKPYVAQRVLCIPSHIDLNAWRKAWEDVVAALPILRTRVAQLQEPGLQQVVLKNSISWTQASDLAEYLENDRTQKMNLGESLARYAIVEDSADGKRYMVWTIHHVLYDGWSEPIILKQVSDALQGQPVEVKAQMRDFVRFVRDSDDAAVQEFWRRELKGAVGPQFPRLPSRDFMPTPDALVERQVSLDTSSGSPFTMATLIRGAWALVASQYTGSDDIVFGETLTGRDIPLPGVESIVGPLIATVPIRVRILRGSTVESYLQAVQQSVLARTPYQHLGMQNIRKVSQDAQHACETGTGLVIQPEPEYVGSELGVERGDVVLEALHFNPYPLMLACGIRKGGFRVCASFDSSLIETRQMERMLAQLETACWQLSQGLSRKVDEISCLPEAELNQIWQWNRSPPLSLDETTSRLRANASTKPGSSYPPAVVPWVCSPRNSSLLSPIGCVGELWLEGALLSGDTVDSPAWLVAGSSTCAGRTGKVQATGDMVQLREDGSLVFVGRKENVVPVQGHAVDITEIERHLAEHLPPTIRAAATVVRSSSDQELVMFIEQPAAEEACIELLSEKREIVCDAPDKAFQTTICATIPGSLAAVLKKLDKYMRDSLPSYMAPSAYIVVEKLPNTMDDIDHNLLNQIASQVTPQILNELRDGLSNAWTKATAPNHLSASESILRSAWAKVLRVDPEQIDVDDNFFRRGGDSVLAMKLVSSLRAQGYSLSVADIFRHMRLSDAARVMKVDERSTEKINSYQPFSMLRLPDVQQFLANIVRPQLGDQHWPIRDVLPVTDSQDMDIRATIQPPRTSIQYTMLYFDNSVDRERLFRSCSDLVKTHEILRTVFISHESSFLQVVLNELEIPVRAHKTDKQLDQYVASLFREDIESNFQLGCPFLRLFYVEGNNGESCLVIGLSHAQYDGVSLPRLLQDLDALYTGTQLATFSPFSLYMAQTSEEAIQNKAAAYWRNLLSSSSLSTLDGPSSDPTDKAIFHTRPVNIHPLKEITTANLLTAAWAMVLARRLQTPDVTFGSVTSGRTLDIPNAENFMGPCYQLTPVRVPFHPDWTASDLLNFVQTQSAESAAHDFLGFEKIAKLAGWASGRQGFDSIVHHQDWEDFDMMPFGGGSCRVDIANPHGDAAYPVKAVSFVKEGEIHVGVVCSERDVMFVDEVLGELAAAVVELAGQSTEVLLDSKLFSGQ</sequence>
<gene>
    <name evidence="10" type="primary">NRPS4</name>
    <name evidence="9" type="synonym">sidD</name>
    <name type="ORF">AFUA_3G03420</name>
</gene>
<name>SIDD_ASPFU</name>
<organism>
    <name type="scientific">Aspergillus fumigatus (strain ATCC MYA-4609 / CBS 101355 / FGSC A1100 / Af293)</name>
    <name type="common">Neosartorya fumigata</name>
    <dbReference type="NCBI Taxonomy" id="330879"/>
    <lineage>
        <taxon>Eukaryota</taxon>
        <taxon>Fungi</taxon>
        <taxon>Dikarya</taxon>
        <taxon>Ascomycota</taxon>
        <taxon>Pezizomycotina</taxon>
        <taxon>Eurotiomycetes</taxon>
        <taxon>Eurotiomycetidae</taxon>
        <taxon>Eurotiales</taxon>
        <taxon>Aspergillaceae</taxon>
        <taxon>Aspergillus</taxon>
        <taxon>Aspergillus subgen. Fumigati</taxon>
    </lineage>
</organism>
<reference key="1">
    <citation type="journal article" date="2005" name="Nature">
        <title>Genomic sequence of the pathogenic and allergenic filamentous fungus Aspergillus fumigatus.</title>
        <authorList>
            <person name="Nierman W.C."/>
            <person name="Pain A."/>
            <person name="Anderson M.J."/>
            <person name="Wortman J.R."/>
            <person name="Kim H.S."/>
            <person name="Arroyo J."/>
            <person name="Berriman M."/>
            <person name="Abe K."/>
            <person name="Archer D.B."/>
            <person name="Bermejo C."/>
            <person name="Bennett J.W."/>
            <person name="Bowyer P."/>
            <person name="Chen D."/>
            <person name="Collins M."/>
            <person name="Coulsen R."/>
            <person name="Davies R."/>
            <person name="Dyer P.S."/>
            <person name="Farman M.L."/>
            <person name="Fedorova N."/>
            <person name="Fedorova N.D."/>
            <person name="Feldblyum T.V."/>
            <person name="Fischer R."/>
            <person name="Fosker N."/>
            <person name="Fraser A."/>
            <person name="Garcia J.L."/>
            <person name="Garcia M.J."/>
            <person name="Goble A."/>
            <person name="Goldman G.H."/>
            <person name="Gomi K."/>
            <person name="Griffith-Jones S."/>
            <person name="Gwilliam R."/>
            <person name="Haas B.J."/>
            <person name="Haas H."/>
            <person name="Harris D.E."/>
            <person name="Horiuchi H."/>
            <person name="Huang J."/>
            <person name="Humphray S."/>
            <person name="Jimenez J."/>
            <person name="Keller N."/>
            <person name="Khouri H."/>
            <person name="Kitamoto K."/>
            <person name="Kobayashi T."/>
            <person name="Konzack S."/>
            <person name="Kulkarni R."/>
            <person name="Kumagai T."/>
            <person name="Lafton A."/>
            <person name="Latge J.-P."/>
            <person name="Li W."/>
            <person name="Lord A."/>
            <person name="Lu C."/>
            <person name="Majoros W.H."/>
            <person name="May G.S."/>
            <person name="Miller B.L."/>
            <person name="Mohamoud Y."/>
            <person name="Molina M."/>
            <person name="Monod M."/>
            <person name="Mouyna I."/>
            <person name="Mulligan S."/>
            <person name="Murphy L.D."/>
            <person name="O'Neil S."/>
            <person name="Paulsen I."/>
            <person name="Penalva M.A."/>
            <person name="Pertea M."/>
            <person name="Price C."/>
            <person name="Pritchard B.L."/>
            <person name="Quail M.A."/>
            <person name="Rabbinowitsch E."/>
            <person name="Rawlins N."/>
            <person name="Rajandream M.A."/>
            <person name="Reichard U."/>
            <person name="Renauld H."/>
            <person name="Robson G.D."/>
            <person name="Rodriguez de Cordoba S."/>
            <person name="Rodriguez-Pena J.M."/>
            <person name="Ronning C.M."/>
            <person name="Rutter S."/>
            <person name="Salzberg S.L."/>
            <person name="Sanchez M."/>
            <person name="Sanchez-Ferrero J.C."/>
            <person name="Saunders D."/>
            <person name="Seeger K."/>
            <person name="Squares R."/>
            <person name="Squares S."/>
            <person name="Takeuchi M."/>
            <person name="Tekaia F."/>
            <person name="Turner G."/>
            <person name="Vazquez de Aldana C.R."/>
            <person name="Weidman J."/>
            <person name="White O."/>
            <person name="Woodward J.R."/>
            <person name="Yu J.-H."/>
            <person name="Fraser C.M."/>
            <person name="Galagan J.E."/>
            <person name="Asai K."/>
            <person name="Machida M."/>
            <person name="Hall N."/>
            <person name="Barrell B.G."/>
            <person name="Denning D.W."/>
        </authorList>
    </citation>
    <scope>NUCLEOTIDE SEQUENCE [LARGE SCALE GENOMIC DNA]</scope>
    <source>
        <strain>ATCC MYA-4609 / CBS 101355 / FGSC A1100 / Af293</strain>
    </source>
</reference>
<reference key="2">
    <citation type="journal article" date="2004" name="J. Exp. Med.">
        <title>Siderophore biosynthesis but not reductive iron assimilation is essential for Aspergillus fumigatus virulence.</title>
        <authorList>
            <person name="Schrettl M."/>
            <person name="Bignell E."/>
            <person name="Kragl C."/>
            <person name="Joechl C."/>
            <person name="Rogers T."/>
            <person name="Arst H.N. Jr."/>
            <person name="Haynes K."/>
            <person name="Haas H."/>
        </authorList>
    </citation>
    <scope>FUNCTION</scope>
</reference>
<reference key="3">
    <citation type="journal article" date="2005" name="Infect. Immun.">
        <title>The Aspergillus fumigatus siderophore biosynthetic gene sidA, encoding L-ornithine N(5)-oxygenase, is required for virulence.</title>
        <authorList>
            <person name="Hissen A.H."/>
            <person name="Wan A.N."/>
            <person name="Warwas M.L."/>
            <person name="Pinto L.J."/>
            <person name="Moore M.M."/>
        </authorList>
    </citation>
    <scope>FUNCTION</scope>
    <source>
        <strain>NIH 5233 / ATCC 13073</strain>
    </source>
</reference>
<reference key="4">
    <citation type="journal article" date="2005" name="FEMS Microbiol. Lett.">
        <title>The expression of selected non-ribosomal peptide synthetases in Aspergillus fumigatus is controlled by the availability of free iron.</title>
        <authorList>
            <person name="Reiber K."/>
            <person name="Reeves E.P."/>
            <person name="Neville C.M."/>
            <person name="Winkler R."/>
            <person name="Gebhardt P."/>
            <person name="Kavanagh K."/>
            <person name="Doyle S."/>
        </authorList>
    </citation>
    <scope>DOMAIN</scope>
    <scope>INDUCTION</scope>
    <scope>FUNCTION</scope>
</reference>
<reference key="5">
    <citation type="journal article" date="2006" name="Gene">
        <title>Phylogenomic analysis of non-ribosomal peptide synthetases in the genus Aspergillus.</title>
        <authorList>
            <person name="Cramer R.A. Jr."/>
            <person name="Stajich J.E."/>
            <person name="Yamanaka Y."/>
            <person name="Dietrich F.S."/>
            <person name="Steinbach W.J."/>
            <person name="Perfect J.R."/>
        </authorList>
    </citation>
    <scope>NOMENCLATURE</scope>
</reference>
<reference key="6">
    <citation type="journal article" date="2007" name="PLoS Pathog.">
        <title>Distinct roles for intra- and extracellular siderophores during Aspergillus fumigatus infection.</title>
        <authorList>
            <person name="Schrettl M."/>
            <person name="Bignell E."/>
            <person name="Kragl C."/>
            <person name="Sabiha Y."/>
            <person name="Loss O."/>
            <person name="Eisendle M."/>
            <person name="Wallner A."/>
            <person name="Arst H.N. Jr."/>
            <person name="Haynes K."/>
            <person name="Haas H."/>
        </authorList>
    </citation>
    <scope>FUNCTION</scope>
    <scope>DISRUPTION PHENOTYPE</scope>
    <scope>INDUCTION</scope>
</reference>
<reference key="7">
    <citation type="journal article" date="2007" name="Microbiology">
        <title>Nonribosomal peptide synthesis in Aspergillus fumigatus and other fungi.</title>
        <authorList>
            <person name="Stack D."/>
            <person name="Neville C."/>
            <person name="Doyle S."/>
        </authorList>
    </citation>
    <scope>REVIEW ON FUNCTION</scope>
    <scope>DOMAIN</scope>
</reference>
<reference key="8">
    <citation type="journal article" date="2008" name="Mol. Microbiol.">
        <title>SreA-mediated iron regulation in Aspergillus fumigatus.</title>
        <authorList>
            <person name="Schrettl M."/>
            <person name="Kim H.S."/>
            <person name="Eisendle M."/>
            <person name="Kragl C."/>
            <person name="Nierman W.C."/>
            <person name="Heinekamp T."/>
            <person name="Werner E.R."/>
            <person name="Jacobsen I."/>
            <person name="Illmer P."/>
            <person name="Yi H."/>
            <person name="Brakhage A.A."/>
            <person name="Haas H."/>
        </authorList>
    </citation>
    <scope>INDUCTION</scope>
</reference>
<reference key="9">
    <citation type="journal article" date="2011" name="Appl. Environ. Microbiol.">
        <title>SidL, an Aspergillus fumigatus transacetylase involved in biosynthesis of the siderophores ferricrocin and hydroxyferricrocin.</title>
        <authorList>
            <person name="Blatzer M."/>
            <person name="Schrettl M."/>
            <person name="Sarg B."/>
            <person name="Lindner H.H."/>
            <person name="Pfaller K."/>
            <person name="Haas H."/>
        </authorList>
    </citation>
    <scope>FUNCTION</scope>
</reference>
<reference key="10">
    <citation type="journal article" date="2012" name="Proc. Natl. Acad. Sci. U.S.A.">
        <title>Mevalonate governs interdependency of ergosterol and siderophore biosyntheses in the fungal pathogen Aspergillus fumigatus.</title>
        <authorList>
            <person name="Yasmin S."/>
            <person name="Alcazar-Fuoli L."/>
            <person name="Gruendlinger M."/>
            <person name="Puempel T."/>
            <person name="Cairns T."/>
            <person name="Blatzer M."/>
            <person name="Lopez J.F."/>
            <person name="Grimalt J.O."/>
            <person name="Bignell E."/>
            <person name="Haas H."/>
        </authorList>
    </citation>
    <scope>FUNCTION</scope>
</reference>
<keyword id="KW-0436">Ligase</keyword>
<keyword id="KW-0596">Phosphopantetheine</keyword>
<keyword id="KW-0597">Phosphoprotein</keyword>
<keyword id="KW-1185">Reference proteome</keyword>
<keyword id="KW-0677">Repeat</keyword>
<keyword id="KW-0843">Virulence</keyword>
<protein>
    <recommendedName>
        <fullName evidence="9">Nonribosomal peptide synthetase sidD</fullName>
        <shortName evidence="9">NPRS sidD</shortName>
        <ecNumber evidence="13">6.3.2.-</ecNumber>
    </recommendedName>
    <alternativeName>
        <fullName evidence="11">Siderophore synthetase D</fullName>
    </alternativeName>
</protein>
<comment type="function">
    <text evidence="2 3 4 5 6 7 8">Nonribosomal peptide synthetase; part of the siderophore biosynthetic pathway (PubMed:15953695, PubMed:17464044, PubMed:17845073). Aspergillus fumigatus produces four types of siderophores, low-molecular-mass iron chelators, including excreted fusarinine C (FsC) and triacetylfusarinine C (TAFC) for iron uptake; and intacellular ferricrocin (FC) for hyphal and hydroxyferricrocin (HFC) for conidial iron distribution and storage. TAFC consists of three N(2)-acetyl-N(5)-anhydromevalonyl-N(5)-hydroxyornithine residues cyclically linked by ester bonds; FC is a cyclic hexapeptide with the structure Gly-Ser-Gly-(N(5)-acetyl-N(5)-hydroxyornithine)x3. The biosynthesis of all four siderophores depends on the hydroxylation of ornithine, catalyzed by the monooxygenase sidA (PubMed:15504822, PubMed:16113265). Subsequently, the pathways for biosynthesis of extra- and intracellular siderophores split (PubMed:17845073). For biosynthesis of extracellular siderophores, the transacylase sidF transfers anhydromevalonyl to N(5)-hydroxyornithine (PubMed:17845073). The required anhydromevalonyl-CoA moiety is derived from mevalonate by CoA ligation and dehydration catalyzed by sidI and sidH respectively (PubMed:22106303). The acetylation of N(5)-hydroxyornithine for FC biosynthesis involves the constitutively expressed sidL (PubMed:21622789). FC is hydroxylated to HFC by an as yet uncharacterized enzyme during conidiation (PubMed:17845073). Assembly of fusarinine C (FsC) and FC is catalyzed by two different nonribosomal peptide synthetases (NRPS), sidD and sidC respectively (PubMed:15953695, PubMed:17464044, PubMed:17845073). Subsequently, sidG catalyzes N2-acetylation of FsC for forming TAFC (PubMed:17845073). Both extra- and intracellular siderophores are crucial for growth during iron limitation and virulence (PubMed:16113265).</text>
</comment>
<comment type="pathway">
    <text evidence="6">Siderophore biosynthesis.</text>
</comment>
<comment type="induction">
    <text evidence="3 6">Expression is induced during iron starvation (PubMed:15953695, PubMed:17845073).</text>
</comment>
<comment type="domain">
    <text evidence="3 5">NRP synthetases are composed of discrete domains (adenylation (A), thiolation (T) or peptidyl carrier protein (PCP) and condensation (C) domains) which when grouped together are referred to as a single module. Each module is responsible for the recognition (via the A domain) and incorporation of a single amino acid into the growing peptide product. Thus, an NRP synthetase is generally composed of one or more modules and can terminate in a thioesterase domain (TE) that releases the newly synthesized peptide from the enzyme. Occasionally, epimerase (E) domains (responsible for l- to d- amino acid conversion) are present within the NRP synthetase. NRPS4 has the following architecture: A-T-C-A-C.</text>
</comment>
<comment type="disruption phenotype">
    <text evidence="6">Prevents synthesis of TAFC and FsC without affecting FC production (PubMed:17845073).</text>
</comment>
<comment type="similarity">
    <text evidence="12">Belongs to the NRP synthetase family.</text>
</comment>
<dbReference type="EC" id="6.3.2.-" evidence="13"/>
<dbReference type="EMBL" id="AAHF01000010">
    <property type="protein sequence ID" value="EAL86624.1"/>
    <property type="molecule type" value="Genomic_DNA"/>
</dbReference>
<dbReference type="RefSeq" id="XP_748662.1">
    <property type="nucleotide sequence ID" value="XM_743569.1"/>
</dbReference>
<dbReference type="SMR" id="Q4WF53"/>
<dbReference type="STRING" id="330879.Q4WF53"/>
<dbReference type="EnsemblFungi" id="EAL86624">
    <property type="protein sequence ID" value="EAL86624"/>
    <property type="gene ID" value="AFUA_3G03420"/>
</dbReference>
<dbReference type="GeneID" id="3506154"/>
<dbReference type="KEGG" id="afm:AFUA_3G03420"/>
<dbReference type="VEuPathDB" id="FungiDB:Afu3g03420"/>
<dbReference type="eggNOG" id="KOG1178">
    <property type="taxonomic scope" value="Eukaryota"/>
</dbReference>
<dbReference type="HOGENOM" id="CLU_000022_60_2_1"/>
<dbReference type="InParanoid" id="Q4WF53"/>
<dbReference type="OMA" id="IQYTMLY"/>
<dbReference type="OrthoDB" id="416786at2759"/>
<dbReference type="Proteomes" id="UP000002530">
    <property type="component" value="Chromosome 3"/>
</dbReference>
<dbReference type="GO" id="GO:0005737">
    <property type="term" value="C:cytoplasm"/>
    <property type="evidence" value="ECO:0000318"/>
    <property type="project" value="GO_Central"/>
</dbReference>
<dbReference type="GO" id="GO:0016874">
    <property type="term" value="F:ligase activity"/>
    <property type="evidence" value="ECO:0007669"/>
    <property type="project" value="UniProtKB-KW"/>
</dbReference>
<dbReference type="GO" id="GO:0031177">
    <property type="term" value="F:phosphopantetheine binding"/>
    <property type="evidence" value="ECO:0000318"/>
    <property type="project" value="GO_Central"/>
</dbReference>
<dbReference type="GO" id="GO:0043041">
    <property type="term" value="P:amino acid activation for nonribosomal peptide biosynthetic process"/>
    <property type="evidence" value="ECO:0000318"/>
    <property type="project" value="GO_Central"/>
</dbReference>
<dbReference type="GO" id="GO:0010106">
    <property type="term" value="P:cellular response to iron ion starvation"/>
    <property type="evidence" value="ECO:0000270"/>
    <property type="project" value="AspGD"/>
</dbReference>
<dbReference type="GO" id="GO:0006696">
    <property type="term" value="P:ergosterol biosynthetic process"/>
    <property type="evidence" value="ECO:0000315"/>
    <property type="project" value="AspGD"/>
</dbReference>
<dbReference type="GO" id="GO:1900551">
    <property type="term" value="P:N',N'',N'''-triacetylfusarinine C biosynthetic process"/>
    <property type="evidence" value="ECO:0000315"/>
    <property type="project" value="AspGD"/>
</dbReference>
<dbReference type="GO" id="GO:0019184">
    <property type="term" value="P:nonribosomal peptide biosynthetic process"/>
    <property type="evidence" value="ECO:0000255"/>
    <property type="project" value="AspGD"/>
</dbReference>
<dbReference type="GO" id="GO:0019748">
    <property type="term" value="P:secondary metabolic process"/>
    <property type="evidence" value="ECO:0000303"/>
    <property type="project" value="AspGD"/>
</dbReference>
<dbReference type="GO" id="GO:0044550">
    <property type="term" value="P:secondary metabolite biosynthetic process"/>
    <property type="evidence" value="ECO:0000315"/>
    <property type="project" value="AspGD"/>
</dbReference>
<dbReference type="CDD" id="cd05918">
    <property type="entry name" value="A_NRPS_SidN3_like"/>
    <property type="match status" value="1"/>
</dbReference>
<dbReference type="CDD" id="cd19542">
    <property type="entry name" value="CT_NRPS-like"/>
    <property type="match status" value="1"/>
</dbReference>
<dbReference type="CDD" id="cd19545">
    <property type="entry name" value="FUM14_C_NRPS-like"/>
    <property type="match status" value="1"/>
</dbReference>
<dbReference type="FunFam" id="3.30.300.30:FF:000015">
    <property type="entry name" value="Nonribosomal peptide synthase SidD"/>
    <property type="match status" value="1"/>
</dbReference>
<dbReference type="FunFam" id="3.30.300.30:FF:000072">
    <property type="entry name" value="Nonribosomal peptide synthase SidD"/>
    <property type="match status" value="1"/>
</dbReference>
<dbReference type="FunFam" id="3.30.559.10:FF:000050">
    <property type="entry name" value="Nonribosomal peptide synthase SidD"/>
    <property type="match status" value="1"/>
</dbReference>
<dbReference type="FunFam" id="3.30.559.30:FF:000003">
    <property type="entry name" value="Nonribosomal peptide synthase SidD"/>
    <property type="match status" value="1"/>
</dbReference>
<dbReference type="FunFam" id="3.30.559.30:FF:000020">
    <property type="entry name" value="Nonribosomal peptide synthase SidD"/>
    <property type="match status" value="1"/>
</dbReference>
<dbReference type="FunFam" id="3.30.559.10:FF:000034">
    <property type="entry name" value="Nonribosomal peptide synthase sidD"/>
    <property type="match status" value="1"/>
</dbReference>
<dbReference type="FunFam" id="1.10.1200.10:FF:000005">
    <property type="entry name" value="Nonribosomal peptide synthetase 1"/>
    <property type="match status" value="2"/>
</dbReference>
<dbReference type="FunFam" id="3.40.50.12780:FF:000014">
    <property type="entry name" value="Nonribosomal peptide synthetase 1"/>
    <property type="match status" value="1"/>
</dbReference>
<dbReference type="Gene3D" id="3.30.300.30">
    <property type="match status" value="2"/>
</dbReference>
<dbReference type="Gene3D" id="1.10.1200.10">
    <property type="entry name" value="ACP-like"/>
    <property type="match status" value="2"/>
</dbReference>
<dbReference type="Gene3D" id="3.30.559.10">
    <property type="entry name" value="Chloramphenicol acetyltransferase-like domain"/>
    <property type="match status" value="2"/>
</dbReference>
<dbReference type="Gene3D" id="2.30.38.10">
    <property type="entry name" value="Luciferase, Domain 3"/>
    <property type="match status" value="1"/>
</dbReference>
<dbReference type="Gene3D" id="3.40.50.12780">
    <property type="entry name" value="N-terminal domain of ligase-like"/>
    <property type="match status" value="1"/>
</dbReference>
<dbReference type="Gene3D" id="3.30.559.30">
    <property type="entry name" value="Nonribosomal peptide synthetase, condensation domain"/>
    <property type="match status" value="2"/>
</dbReference>
<dbReference type="InterPro" id="IPR010071">
    <property type="entry name" value="AA_adenyl_dom"/>
</dbReference>
<dbReference type="InterPro" id="IPR036736">
    <property type="entry name" value="ACP-like_sf"/>
</dbReference>
<dbReference type="InterPro" id="IPR045851">
    <property type="entry name" value="AMP-bd_C_sf"/>
</dbReference>
<dbReference type="InterPro" id="IPR020845">
    <property type="entry name" value="AMP-binding_CS"/>
</dbReference>
<dbReference type="InterPro" id="IPR000873">
    <property type="entry name" value="AMP-dep_synth/lig_dom"/>
</dbReference>
<dbReference type="InterPro" id="IPR042099">
    <property type="entry name" value="ANL_N_sf"/>
</dbReference>
<dbReference type="InterPro" id="IPR023213">
    <property type="entry name" value="CAT-like_dom_sf"/>
</dbReference>
<dbReference type="InterPro" id="IPR001242">
    <property type="entry name" value="Condensatn"/>
</dbReference>
<dbReference type="InterPro" id="IPR020806">
    <property type="entry name" value="PKS_PP-bd"/>
</dbReference>
<dbReference type="InterPro" id="IPR009081">
    <property type="entry name" value="PP-bd_ACP"/>
</dbReference>
<dbReference type="InterPro" id="IPR056896">
    <property type="entry name" value="SIDD_N"/>
</dbReference>
<dbReference type="NCBIfam" id="TIGR01733">
    <property type="entry name" value="AA-adenyl-dom"/>
    <property type="match status" value="1"/>
</dbReference>
<dbReference type="PANTHER" id="PTHR45527">
    <property type="entry name" value="NONRIBOSOMAL PEPTIDE SYNTHETASE"/>
    <property type="match status" value="1"/>
</dbReference>
<dbReference type="PANTHER" id="PTHR45527:SF3">
    <property type="entry name" value="SIDEROPHORE SYNTHETASE (EUROFUNG)"/>
    <property type="match status" value="1"/>
</dbReference>
<dbReference type="Pfam" id="PF00501">
    <property type="entry name" value="AMP-binding"/>
    <property type="match status" value="1"/>
</dbReference>
<dbReference type="Pfam" id="PF00668">
    <property type="entry name" value="Condensation"/>
    <property type="match status" value="2"/>
</dbReference>
<dbReference type="Pfam" id="PF00550">
    <property type="entry name" value="PP-binding"/>
    <property type="match status" value="2"/>
</dbReference>
<dbReference type="Pfam" id="PF24895">
    <property type="entry name" value="SIDD_N"/>
    <property type="match status" value="1"/>
</dbReference>
<dbReference type="SMART" id="SM00823">
    <property type="entry name" value="PKS_PP"/>
    <property type="match status" value="2"/>
</dbReference>
<dbReference type="SUPFAM" id="SSF56801">
    <property type="entry name" value="Acetyl-CoA synthetase-like"/>
    <property type="match status" value="2"/>
</dbReference>
<dbReference type="SUPFAM" id="SSF47336">
    <property type="entry name" value="ACP-like"/>
    <property type="match status" value="2"/>
</dbReference>
<dbReference type="SUPFAM" id="SSF52777">
    <property type="entry name" value="CoA-dependent acyltransferases"/>
    <property type="match status" value="4"/>
</dbReference>
<dbReference type="PROSITE" id="PS00455">
    <property type="entry name" value="AMP_BINDING"/>
    <property type="match status" value="1"/>
</dbReference>
<dbReference type="PROSITE" id="PS50075">
    <property type="entry name" value="CARRIER"/>
    <property type="match status" value="2"/>
</dbReference>
<proteinExistence type="evidence at transcript level"/>
<evidence type="ECO:0000255" key="1">
    <source>
        <dbReference type="PROSITE-ProRule" id="PRU00258"/>
    </source>
</evidence>
<evidence type="ECO:0000269" key="2">
    <source>
    </source>
</evidence>
<evidence type="ECO:0000269" key="3">
    <source>
    </source>
</evidence>
<evidence type="ECO:0000269" key="4">
    <source>
    </source>
</evidence>
<evidence type="ECO:0000269" key="5">
    <source>
    </source>
</evidence>
<evidence type="ECO:0000269" key="6">
    <source>
    </source>
</evidence>
<evidence type="ECO:0000269" key="7">
    <source>
    </source>
</evidence>
<evidence type="ECO:0000269" key="8">
    <source>
    </source>
</evidence>
<evidence type="ECO:0000303" key="9">
    <source>
    </source>
</evidence>
<evidence type="ECO:0000303" key="10">
    <source>
    </source>
</evidence>
<evidence type="ECO:0000303" key="11">
    <source>
    </source>
</evidence>
<evidence type="ECO:0000305" key="12"/>
<evidence type="ECO:0000305" key="13">
    <source>
    </source>
</evidence>
<accession>Q4WF53</accession>